<dbReference type="EMBL" id="DQ821119">
    <property type="protein sequence ID" value="ABG79611.1"/>
    <property type="molecule type" value="Genomic_DNA"/>
</dbReference>
<dbReference type="RefSeq" id="YP_001023712.1">
    <property type="nucleotide sequence ID" value="NC_008829.1"/>
</dbReference>
<dbReference type="SMR" id="A2T344"/>
<dbReference type="GeneID" id="4788166"/>
<dbReference type="GO" id="GO:0009535">
    <property type="term" value="C:chloroplast thylakoid membrane"/>
    <property type="evidence" value="ECO:0007669"/>
    <property type="project" value="UniProtKB-SubCell"/>
</dbReference>
<dbReference type="GO" id="GO:0009522">
    <property type="term" value="C:photosystem I"/>
    <property type="evidence" value="ECO:0007669"/>
    <property type="project" value="InterPro"/>
</dbReference>
<dbReference type="GO" id="GO:0015979">
    <property type="term" value="P:photosynthesis"/>
    <property type="evidence" value="ECO:0007669"/>
    <property type="project" value="UniProtKB-UniRule"/>
</dbReference>
<dbReference type="HAMAP" id="MF_00437">
    <property type="entry name" value="Ycf4"/>
    <property type="match status" value="1"/>
</dbReference>
<dbReference type="InterPro" id="IPR003359">
    <property type="entry name" value="PSI_Ycf4_assembly"/>
</dbReference>
<dbReference type="NCBIfam" id="NF002712">
    <property type="entry name" value="PRK02542.1"/>
    <property type="match status" value="1"/>
</dbReference>
<dbReference type="PANTHER" id="PTHR33288">
    <property type="match status" value="1"/>
</dbReference>
<dbReference type="PANTHER" id="PTHR33288:SF4">
    <property type="entry name" value="PHOTOSYSTEM I ASSEMBLY PROTEIN YCF4"/>
    <property type="match status" value="1"/>
</dbReference>
<dbReference type="Pfam" id="PF02392">
    <property type="entry name" value="Ycf4"/>
    <property type="match status" value="1"/>
</dbReference>
<evidence type="ECO:0000255" key="1">
    <source>
        <dbReference type="HAMAP-Rule" id="MF_00437"/>
    </source>
</evidence>
<reference key="1">
    <citation type="journal article" date="2007" name="Am. Fern J.">
        <title>The complete plastid genome sequence of Angiopteris evecta (G. Forst.) Hoffm. (Marattiaceae).</title>
        <authorList>
            <person name="Roper J.M."/>
            <person name="Hansen S.K."/>
            <person name="Wolf P.G."/>
            <person name="Karol K.G."/>
            <person name="Mandoli D.F."/>
            <person name="Everett K.D.E."/>
            <person name="Kuehl J.V."/>
            <person name="Boore J.L."/>
        </authorList>
    </citation>
    <scope>NUCLEOTIDE SEQUENCE [LARGE SCALE GENOMIC DNA]</scope>
</reference>
<name>YCF4_ANGEV</name>
<keyword id="KW-0150">Chloroplast</keyword>
<keyword id="KW-0472">Membrane</keyword>
<keyword id="KW-0602">Photosynthesis</keyword>
<keyword id="KW-0934">Plastid</keyword>
<keyword id="KW-0793">Thylakoid</keyword>
<keyword id="KW-0812">Transmembrane</keyword>
<keyword id="KW-1133">Transmembrane helix</keyword>
<comment type="function">
    <text evidence="1">Seems to be required for the assembly of the photosystem I complex.</text>
</comment>
<comment type="subcellular location">
    <subcellularLocation>
        <location evidence="1">Plastid</location>
        <location evidence="1">Chloroplast thylakoid membrane</location>
        <topology evidence="1">Multi-pass membrane protein</topology>
    </subcellularLocation>
</comment>
<comment type="similarity">
    <text evidence="1">Belongs to the Ycf4 family.</text>
</comment>
<accession>A2T344</accession>
<organism>
    <name type="scientific">Angiopteris evecta</name>
    <name type="common">Mule's foot fern</name>
    <name type="synonym">Polypodium evectum</name>
    <dbReference type="NCBI Taxonomy" id="13825"/>
    <lineage>
        <taxon>Eukaryota</taxon>
        <taxon>Viridiplantae</taxon>
        <taxon>Streptophyta</taxon>
        <taxon>Embryophyta</taxon>
        <taxon>Tracheophyta</taxon>
        <taxon>Polypodiopsida</taxon>
        <taxon>Marattiidae</taxon>
        <taxon>Marattiales</taxon>
        <taxon>Marattiaceae</taxon>
        <taxon>Angiopteris</taxon>
    </lineage>
</organism>
<protein>
    <recommendedName>
        <fullName evidence="1">Photosystem I assembly protein Ycf4</fullName>
    </recommendedName>
</protein>
<feature type="chain" id="PRO_0000325994" description="Photosystem I assembly protein Ycf4">
    <location>
        <begin position="1"/>
        <end position="184"/>
    </location>
</feature>
<feature type="transmembrane region" description="Helical" evidence="1">
    <location>
        <begin position="22"/>
        <end position="42"/>
    </location>
</feature>
<feature type="transmembrane region" description="Helical" evidence="1">
    <location>
        <begin position="64"/>
        <end position="84"/>
    </location>
</feature>
<geneLocation type="chloroplast"/>
<gene>
    <name evidence="1" type="primary">ycf4</name>
</gene>
<sequence>MNYQSEWLRIDPIKGSRRFSNLCWAFILVLGAIGFSLVGFSSYLGRDLIPILSSQQIIFLPQGIVMCFYGIAGIFLGFYLWCTILWNVGSGYNQFNKREGIVYLFRWGFPGENRRICIRFMIKDIQAIRMEIQEGFSPRRVLYLRIKGQQDVPLTRLDEELTLREMEEKAAELARFLRVSIEGF</sequence>
<proteinExistence type="inferred from homology"/>